<comment type="similarity">
    <text evidence="1">Belongs to the UPF0328 family.</text>
</comment>
<feature type="chain" id="PRO_0000223131" description="UPF0328 protein ECU06_0070">
    <location>
        <begin position="1"/>
        <end position="267"/>
    </location>
</feature>
<protein>
    <recommendedName>
        <fullName>UPF0328 protein ECU06_0070</fullName>
    </recommendedName>
</protein>
<proteinExistence type="inferred from homology"/>
<gene>
    <name type="ordered locus">ECU06_0070</name>
</gene>
<reference key="1">
    <citation type="journal article" date="2001" name="Nature">
        <title>Genome sequence and gene compaction of the eukaryote parasite Encephalitozoon cuniculi.</title>
        <authorList>
            <person name="Katinka M.D."/>
            <person name="Duprat S."/>
            <person name="Cornillot E."/>
            <person name="Metenier G."/>
            <person name="Thomarat F."/>
            <person name="Prensier G."/>
            <person name="Barbe V."/>
            <person name="Peyretaillade E."/>
            <person name="Brottier P."/>
            <person name="Wincker P."/>
            <person name="Delbac F."/>
            <person name="El Alaoui H."/>
            <person name="Peyret P."/>
            <person name="Saurin W."/>
            <person name="Gouy M."/>
            <person name="Weissenbach J."/>
            <person name="Vivares C.P."/>
        </authorList>
    </citation>
    <scope>NUCLEOTIDE SEQUENCE [LARGE SCALE GENOMIC DNA]</scope>
    <source>
        <strain>GB-M1</strain>
    </source>
</reference>
<name>Y607_ENCCU</name>
<sequence length="267" mass="30541">MNTTHVPEPHRTEQHTENQRHWRKILDIAPIVSIAFPAAMYFIFDEDSFEGSLFLRFVTVLLPFSYSAVQYAVLLHTNRMPHNKPEGILQSMLYYTLNLLLLAFTIISILSIIAFTLDEWENNDDSLLYSITLPSFFIPLTYLLSVSCRLVPGQIGFTDTGINVLIDILILLFPRTALVSKESKHRLLYAVLFLLPILIRLLKEKYCPSGKSSLPTASWRVAVLALILILVFFAYTFMMCRSMVILNNHFGLLNKLKRVSAPSRSDK</sequence>
<organism>
    <name type="scientific">Encephalitozoon cuniculi (strain GB-M1)</name>
    <name type="common">Microsporidian parasite</name>
    <dbReference type="NCBI Taxonomy" id="284813"/>
    <lineage>
        <taxon>Eukaryota</taxon>
        <taxon>Fungi</taxon>
        <taxon>Fungi incertae sedis</taxon>
        <taxon>Microsporidia</taxon>
        <taxon>Unikaryonidae</taxon>
        <taxon>Encephalitozoon</taxon>
    </lineage>
</organism>
<accession>Q8SVF5</accession>
<dbReference type="EMBL" id="AL590446">
    <property type="protein sequence ID" value="CAD25367.1"/>
    <property type="molecule type" value="Genomic_DNA"/>
</dbReference>
<dbReference type="RefSeq" id="NP_585763.1">
    <property type="nucleotide sequence ID" value="NM_001041385.1"/>
</dbReference>
<dbReference type="GeneID" id="859186"/>
<dbReference type="KEGG" id="ecu:ECU06_0070"/>
<dbReference type="VEuPathDB" id="MicrosporidiaDB:ECU06_0070"/>
<dbReference type="HOGENOM" id="CLU_059413_0_0_1"/>
<dbReference type="InParanoid" id="Q8SVF5"/>
<dbReference type="OrthoDB" id="2198933at2759"/>
<dbReference type="Proteomes" id="UP000000819">
    <property type="component" value="Chromosome VI"/>
</dbReference>
<dbReference type="InterPro" id="IPR019081">
    <property type="entry name" value="UPF0328"/>
</dbReference>
<dbReference type="Pfam" id="PF09591">
    <property type="entry name" value="DUF2463"/>
    <property type="match status" value="1"/>
</dbReference>
<keyword id="KW-1185">Reference proteome</keyword>
<evidence type="ECO:0000305" key="1"/>